<name>BIOF_AERS4</name>
<feature type="chain" id="PRO_0000380888" description="8-amino-7-oxononanoate synthase">
    <location>
        <begin position="1"/>
        <end position="398"/>
    </location>
</feature>
<feature type="binding site" evidence="1">
    <location>
        <position position="26"/>
    </location>
    <ligand>
        <name>substrate</name>
    </ligand>
</feature>
<feature type="binding site" evidence="1">
    <location>
        <begin position="113"/>
        <end position="114"/>
    </location>
    <ligand>
        <name>pyridoxal 5'-phosphate</name>
        <dbReference type="ChEBI" id="CHEBI:597326"/>
    </ligand>
</feature>
<feature type="binding site" evidence="1">
    <location>
        <position position="138"/>
    </location>
    <ligand>
        <name>substrate</name>
    </ligand>
</feature>
<feature type="binding site" evidence="1">
    <location>
        <position position="181"/>
    </location>
    <ligand>
        <name>pyridoxal 5'-phosphate</name>
        <dbReference type="ChEBI" id="CHEBI:597326"/>
    </ligand>
</feature>
<feature type="binding site" evidence="1">
    <location>
        <position position="209"/>
    </location>
    <ligand>
        <name>pyridoxal 5'-phosphate</name>
        <dbReference type="ChEBI" id="CHEBI:597326"/>
    </ligand>
</feature>
<feature type="binding site" evidence="1">
    <location>
        <position position="238"/>
    </location>
    <ligand>
        <name>pyridoxal 5'-phosphate</name>
        <dbReference type="ChEBI" id="CHEBI:597326"/>
    </ligand>
</feature>
<feature type="binding site" evidence="1">
    <location>
        <position position="355"/>
    </location>
    <ligand>
        <name>substrate</name>
    </ligand>
</feature>
<feature type="modified residue" description="N6-(pyridoxal phosphate)lysine" evidence="1">
    <location>
        <position position="241"/>
    </location>
</feature>
<evidence type="ECO:0000255" key="1">
    <source>
        <dbReference type="HAMAP-Rule" id="MF_01693"/>
    </source>
</evidence>
<organism>
    <name type="scientific">Aeromonas salmonicida (strain A449)</name>
    <dbReference type="NCBI Taxonomy" id="382245"/>
    <lineage>
        <taxon>Bacteria</taxon>
        <taxon>Pseudomonadati</taxon>
        <taxon>Pseudomonadota</taxon>
        <taxon>Gammaproteobacteria</taxon>
        <taxon>Aeromonadales</taxon>
        <taxon>Aeromonadaceae</taxon>
        <taxon>Aeromonas</taxon>
    </lineage>
</organism>
<proteinExistence type="inferred from homology"/>
<comment type="function">
    <text evidence="1">Catalyzes the decarboxylative condensation of pimeloyl-[acyl-carrier protein] and L-alanine to produce 8-amino-7-oxononanoate (AON), [acyl-carrier protein], and carbon dioxide.</text>
</comment>
<comment type="catalytic activity">
    <reaction evidence="1">
        <text>6-carboxyhexanoyl-[ACP] + L-alanine + H(+) = (8S)-8-amino-7-oxononanoate + holo-[ACP] + CO2</text>
        <dbReference type="Rhea" id="RHEA:42288"/>
        <dbReference type="Rhea" id="RHEA-COMP:9685"/>
        <dbReference type="Rhea" id="RHEA-COMP:9955"/>
        <dbReference type="ChEBI" id="CHEBI:15378"/>
        <dbReference type="ChEBI" id="CHEBI:16526"/>
        <dbReference type="ChEBI" id="CHEBI:57972"/>
        <dbReference type="ChEBI" id="CHEBI:64479"/>
        <dbReference type="ChEBI" id="CHEBI:78846"/>
        <dbReference type="ChEBI" id="CHEBI:149468"/>
        <dbReference type="EC" id="2.3.1.47"/>
    </reaction>
</comment>
<comment type="cofactor">
    <cofactor evidence="1">
        <name>pyridoxal 5'-phosphate</name>
        <dbReference type="ChEBI" id="CHEBI:597326"/>
    </cofactor>
</comment>
<comment type="pathway">
    <text evidence="1">Cofactor biosynthesis; biotin biosynthesis.</text>
</comment>
<comment type="subunit">
    <text evidence="1">Homodimer.</text>
</comment>
<comment type="similarity">
    <text evidence="1">Belongs to the class-II pyridoxal-phosphate-dependent aminotransferase family. BioF subfamily.</text>
</comment>
<protein>
    <recommendedName>
        <fullName evidence="1">8-amino-7-oxononanoate synthase</fullName>
        <shortName evidence="1">AONS</shortName>
        <ecNumber evidence="1">2.3.1.47</ecNumber>
    </recommendedName>
    <alternativeName>
        <fullName evidence="1">7-keto-8-amino-pelargonic acid synthase</fullName>
        <shortName evidence="1">7-KAP synthase</shortName>
        <shortName evidence="1">KAPA synthase</shortName>
    </alternativeName>
    <alternativeName>
        <fullName evidence="1">8-amino-7-ketopelargonate synthase</fullName>
    </alternativeName>
</protein>
<keyword id="KW-0093">Biotin biosynthesis</keyword>
<keyword id="KW-0663">Pyridoxal phosphate</keyword>
<keyword id="KW-0808">Transferase</keyword>
<gene>
    <name evidence="1" type="primary">bioF</name>
    <name type="ordered locus">ASA_2876</name>
</gene>
<accession>A4SPR6</accession>
<dbReference type="EC" id="2.3.1.47" evidence="1"/>
<dbReference type="EMBL" id="CP000644">
    <property type="protein sequence ID" value="ABO90888.1"/>
    <property type="molecule type" value="Genomic_DNA"/>
</dbReference>
<dbReference type="RefSeq" id="WP_005313003.1">
    <property type="nucleotide sequence ID" value="NC_009348.1"/>
</dbReference>
<dbReference type="SMR" id="A4SPR6"/>
<dbReference type="STRING" id="29491.GCA_000820065_00844"/>
<dbReference type="KEGG" id="asa:ASA_2876"/>
<dbReference type="PATRIC" id="fig|382245.13.peg.2856"/>
<dbReference type="eggNOG" id="COG0156">
    <property type="taxonomic scope" value="Bacteria"/>
</dbReference>
<dbReference type="HOGENOM" id="CLU_015846_11_2_6"/>
<dbReference type="UniPathway" id="UPA00078"/>
<dbReference type="Proteomes" id="UP000000225">
    <property type="component" value="Chromosome"/>
</dbReference>
<dbReference type="GO" id="GO:0008710">
    <property type="term" value="F:8-amino-7-oxononanoate synthase activity"/>
    <property type="evidence" value="ECO:0007669"/>
    <property type="project" value="UniProtKB-UniRule"/>
</dbReference>
<dbReference type="GO" id="GO:0030170">
    <property type="term" value="F:pyridoxal phosphate binding"/>
    <property type="evidence" value="ECO:0007669"/>
    <property type="project" value="UniProtKB-UniRule"/>
</dbReference>
<dbReference type="GO" id="GO:0009102">
    <property type="term" value="P:biotin biosynthetic process"/>
    <property type="evidence" value="ECO:0007669"/>
    <property type="project" value="UniProtKB-UniRule"/>
</dbReference>
<dbReference type="CDD" id="cd06454">
    <property type="entry name" value="KBL_like"/>
    <property type="match status" value="1"/>
</dbReference>
<dbReference type="Gene3D" id="3.90.1150.10">
    <property type="entry name" value="Aspartate Aminotransferase, domain 1"/>
    <property type="match status" value="1"/>
</dbReference>
<dbReference type="Gene3D" id="3.40.640.10">
    <property type="entry name" value="Type I PLP-dependent aspartate aminotransferase-like (Major domain)"/>
    <property type="match status" value="1"/>
</dbReference>
<dbReference type="HAMAP" id="MF_01693">
    <property type="entry name" value="BioF_aminotrans_2"/>
    <property type="match status" value="1"/>
</dbReference>
<dbReference type="InterPro" id="IPR001917">
    <property type="entry name" value="Aminotrans_II_pyridoxalP_BS"/>
</dbReference>
<dbReference type="InterPro" id="IPR004839">
    <property type="entry name" value="Aminotransferase_I/II_large"/>
</dbReference>
<dbReference type="InterPro" id="IPR050087">
    <property type="entry name" value="AON_synthase_class-II"/>
</dbReference>
<dbReference type="InterPro" id="IPR004723">
    <property type="entry name" value="AONS_Archaea/Proteobacteria"/>
</dbReference>
<dbReference type="InterPro" id="IPR022834">
    <property type="entry name" value="AONS_Proteobacteria"/>
</dbReference>
<dbReference type="InterPro" id="IPR015424">
    <property type="entry name" value="PyrdxlP-dep_Trfase"/>
</dbReference>
<dbReference type="InterPro" id="IPR015421">
    <property type="entry name" value="PyrdxlP-dep_Trfase_major"/>
</dbReference>
<dbReference type="InterPro" id="IPR015422">
    <property type="entry name" value="PyrdxlP-dep_Trfase_small"/>
</dbReference>
<dbReference type="NCBIfam" id="TIGR00858">
    <property type="entry name" value="bioF"/>
    <property type="match status" value="1"/>
</dbReference>
<dbReference type="PANTHER" id="PTHR13693:SF100">
    <property type="entry name" value="8-AMINO-7-OXONONANOATE SYNTHASE"/>
    <property type="match status" value="1"/>
</dbReference>
<dbReference type="PANTHER" id="PTHR13693">
    <property type="entry name" value="CLASS II AMINOTRANSFERASE/8-AMINO-7-OXONONANOATE SYNTHASE"/>
    <property type="match status" value="1"/>
</dbReference>
<dbReference type="Pfam" id="PF00155">
    <property type="entry name" value="Aminotran_1_2"/>
    <property type="match status" value="1"/>
</dbReference>
<dbReference type="SUPFAM" id="SSF53383">
    <property type="entry name" value="PLP-dependent transferases"/>
    <property type="match status" value="1"/>
</dbReference>
<dbReference type="PROSITE" id="PS00599">
    <property type="entry name" value="AA_TRANSFER_CLASS_2"/>
    <property type="match status" value="1"/>
</dbReference>
<reference key="1">
    <citation type="journal article" date="2008" name="BMC Genomics">
        <title>The genome of Aeromonas salmonicida subsp. salmonicida A449: insights into the evolution of a fish pathogen.</title>
        <authorList>
            <person name="Reith M.E."/>
            <person name="Singh R.K."/>
            <person name="Curtis B."/>
            <person name="Boyd J.M."/>
            <person name="Bouevitch A."/>
            <person name="Kimball J."/>
            <person name="Munholland J."/>
            <person name="Murphy C."/>
            <person name="Sarty D."/>
            <person name="Williams J."/>
            <person name="Nash J.H."/>
            <person name="Johnson S.C."/>
            <person name="Brown L.L."/>
        </authorList>
    </citation>
    <scope>NUCLEOTIDE SEQUENCE [LARGE SCALE GENOMIC DNA]</scope>
    <source>
        <strain>A449</strain>
    </source>
</reference>
<sequence>MNGLAVKGPFVLGAALAERELAALLRRRTATDGSVGGRLQVAGRDYLNFSANDYLGLADHSTIKAAFKEGIDCYGTGSGASPLVTGYSRAHQQLEETLADWLGVEAVLLFNCGFSANQAVLKALLGKDHLLWQDRLNHASLQEMGSQLPCKMKRFGHNDMTALERQLEPNRGLIVSEGVFSMDGDQGPWPELARLAAQSGNWLMIDDAHGLGVLGPEGRGTLAAQGVAPASVHIQMGTFGKALGVAGAFVGGSRELVDYLVNFARHYVYSTHMPTAQACAVSKSIELVRAADESRAHLARLITRFRQGTAALGWQLGASDTPIQPLLVGESSAALQLAARLRDRGVWVSAIRPPTVPVGTARLRITLSAAHREQDVDRLLKALGPCSGSASWEGIHHG</sequence>